<keyword id="KW-0325">Glycoprotein</keyword>
<keyword id="KW-0494">Milk protein</keyword>
<keyword id="KW-0597">Phosphoprotein</keyword>
<keyword id="KW-0964">Secreted</keyword>
<keyword id="KW-0732">Signal</keyword>
<evidence type="ECO:0000250" key="1"/>
<evidence type="ECO:0000250" key="2">
    <source>
        <dbReference type="UniProtKB" id="P02668"/>
    </source>
</evidence>
<evidence type="ECO:0000250" key="3">
    <source>
        <dbReference type="UniProtKB" id="P02670"/>
    </source>
</evidence>
<evidence type="ECO:0000256" key="4">
    <source>
        <dbReference type="SAM" id="MobiDB-lite"/>
    </source>
</evidence>
<evidence type="ECO:0000305" key="5"/>
<reference key="1">
    <citation type="journal article" date="1995" name="J. Mol. Evol.">
        <title>Molecular phylogeny based on the kappa-casein and cytochrome b sequences in the mammalian suborder ruminantia.</title>
        <authorList>
            <person name="Chikuni K."/>
            <person name="Mori Y."/>
            <person name="Tabata T."/>
            <person name="Saito M."/>
            <person name="Monma M."/>
            <person name="Kosugiyama M."/>
        </authorList>
    </citation>
    <scope>NUCLEOTIDE SEQUENCE [GENOMIC DNA]</scope>
</reference>
<accession>P50424</accession>
<organism>
    <name type="scientific">Rupicapra rupicapra</name>
    <name type="common">Alpine chamois</name>
    <dbReference type="NCBI Taxonomy" id="34869"/>
    <lineage>
        <taxon>Eukaryota</taxon>
        <taxon>Metazoa</taxon>
        <taxon>Chordata</taxon>
        <taxon>Craniata</taxon>
        <taxon>Vertebrata</taxon>
        <taxon>Euteleostomi</taxon>
        <taxon>Mammalia</taxon>
        <taxon>Eutheria</taxon>
        <taxon>Laurasiatheria</taxon>
        <taxon>Artiodactyla</taxon>
        <taxon>Ruminantia</taxon>
        <taxon>Pecora</taxon>
        <taxon>Bovidae</taxon>
        <taxon>Caprinae</taxon>
        <taxon>Rupicapra</taxon>
    </lineage>
</organism>
<proteinExistence type="evidence at transcript level"/>
<comment type="function">
    <text>Kappa-casein stabilizes micelle formation, preventing casein precipitation in milk.</text>
</comment>
<comment type="subcellular location">
    <subcellularLocation>
        <location>Secreted</location>
    </subcellularLocation>
</comment>
<comment type="tissue specificity">
    <text>Mammary gland specific. Secreted in milk.</text>
</comment>
<comment type="similarity">
    <text evidence="5">Belongs to the kappa-casein family.</text>
</comment>
<name>CASK_RUPRU</name>
<sequence>MMKSFFLVATILALTLPFLGAQEQNQEQSICCEKDERFFEDKIAKYIPIQYVLSRYPSYGLNYYQQRPVALINNQFLPYPYYAKPVAVRSPAQTLQWQVLPNTAPAKSCQDQPTTMAHHPHPHLSFMAIPPKKDQDKTEIPTINTIASAEPTVHSTPTTEAIVNTVDNPEASSESIASAPETNTAQVTSTEV</sequence>
<protein>
    <recommendedName>
        <fullName>Kappa-casein</fullName>
    </recommendedName>
</protein>
<dbReference type="EMBL" id="D32182">
    <property type="protein sequence ID" value="BAA06885.1"/>
    <property type="molecule type" value="Genomic_DNA"/>
</dbReference>
<dbReference type="GlyCosmos" id="P50424">
    <property type="glycosylation" value="8 sites, No reported glycans"/>
</dbReference>
<dbReference type="GO" id="GO:0005615">
    <property type="term" value="C:extracellular space"/>
    <property type="evidence" value="ECO:0007669"/>
    <property type="project" value="TreeGrafter"/>
</dbReference>
<dbReference type="GO" id="GO:0007595">
    <property type="term" value="P:lactation"/>
    <property type="evidence" value="ECO:0007669"/>
    <property type="project" value="TreeGrafter"/>
</dbReference>
<dbReference type="GO" id="GO:0050821">
    <property type="term" value="P:protein stabilization"/>
    <property type="evidence" value="ECO:0007669"/>
    <property type="project" value="TreeGrafter"/>
</dbReference>
<dbReference type="InterPro" id="IPR000117">
    <property type="entry name" value="Casein_kappa"/>
</dbReference>
<dbReference type="PANTHER" id="PTHR11470">
    <property type="entry name" value="KAPPA CASEIN"/>
    <property type="match status" value="1"/>
</dbReference>
<dbReference type="PANTHER" id="PTHR11470:SF2">
    <property type="entry name" value="KAPPA-CASEIN"/>
    <property type="match status" value="1"/>
</dbReference>
<dbReference type="Pfam" id="PF00997">
    <property type="entry name" value="Casein_kappa"/>
    <property type="match status" value="1"/>
</dbReference>
<dbReference type="PIRSF" id="PIRSF002374">
    <property type="entry name" value="Casein_kappa"/>
    <property type="match status" value="1"/>
</dbReference>
<gene>
    <name type="primary">CSN3</name>
    <name type="synonym">CSN10</name>
    <name type="synonym">CSNK</name>
</gene>
<feature type="signal peptide" evidence="1">
    <location>
        <begin position="1"/>
        <end position="21"/>
    </location>
</feature>
<feature type="chain" id="PRO_0000004505" description="Kappa-casein">
    <location>
        <begin position="22"/>
        <end position="192"/>
    </location>
</feature>
<feature type="region of interest" description="Disordered" evidence="4">
    <location>
        <begin position="166"/>
        <end position="192"/>
    </location>
</feature>
<feature type="compositionally biased region" description="Low complexity" evidence="4">
    <location>
        <begin position="169"/>
        <end position="181"/>
    </location>
</feature>
<feature type="compositionally biased region" description="Polar residues" evidence="4">
    <location>
        <begin position="182"/>
        <end position="192"/>
    </location>
</feature>
<feature type="site" description="Cleavage; by chymosin/rennin" evidence="1">
    <location>
        <begin position="126"/>
        <end position="127"/>
    </location>
</feature>
<feature type="modified residue" description="Phosphoserine" evidence="2">
    <location>
        <position position="148"/>
    </location>
</feature>
<feature type="modified residue" description="Phosphoserine; alternate" evidence="2">
    <location>
        <position position="172"/>
    </location>
</feature>
<feature type="modified residue" description="Phosphoserine" evidence="3">
    <location>
        <position position="189"/>
    </location>
</feature>
<feature type="glycosylation site" description="O-linked (GalNAc...) threonine" evidence="2">
    <location>
        <position position="142"/>
    </location>
</feature>
<feature type="glycosylation site" description="O-linked (GalNAc...) threonine" evidence="2">
    <location>
        <position position="152"/>
    </location>
</feature>
<feature type="glycosylation site" description="O-linked (GalNAc...) serine" evidence="2">
    <location>
        <position position="155"/>
    </location>
</feature>
<feature type="glycosylation site" description="O-linked (GalNAc...) threonine" evidence="2">
    <location>
        <position position="156"/>
    </location>
</feature>
<feature type="glycosylation site" description="O-linked (GalNAc...) threonine" evidence="2">
    <location>
        <position position="159"/>
    </location>
</feature>
<feature type="glycosylation site" description="O-linked (GalNAc...) threonine" evidence="2">
    <location>
        <position position="165"/>
    </location>
</feature>
<feature type="glycosylation site" description="O-linked (GalNAc...) serine; alternate" evidence="2">
    <location>
        <position position="172"/>
    </location>
</feature>
<feature type="glycosylation site" description="O-linked (GalNAc...) threonine" evidence="2">
    <location>
        <position position="188"/>
    </location>
</feature>